<comment type="function">
    <text>Inhibits trypsin and chymotrypsin (serine proteases). Does not inhibit elastase, subtilisin, cathepsin L nor papain (serine and cysteine proteases). Protects the plant by inhibiting proteases of invading organisms, decreasing both hyphal growth and zoospores germination of Phytophthora infestans.</text>
</comment>
<comment type="subcellular location">
    <subcellularLocation>
        <location evidence="1">Vacuole</location>
    </subcellularLocation>
</comment>
<comment type="tissue specificity">
    <text>Tubers.</text>
</comment>
<comment type="induction">
    <text>By infection with Phytophthora infestans.</text>
</comment>
<comment type="miscellaneous">
    <text>Has a single chain structure.</text>
</comment>
<comment type="similarity">
    <text evidence="2">Belongs to the protease inhibitor I3 (leguminous Kunitz-type inhibitor) family.</text>
</comment>
<dbReference type="STRING" id="4113.P58516"/>
<dbReference type="ProMEX" id="P58516"/>
<dbReference type="InParanoid" id="P58516"/>
<dbReference type="Proteomes" id="UP000011115">
    <property type="component" value="Unassembled WGS sequence"/>
</dbReference>
<dbReference type="GO" id="GO:0005773">
    <property type="term" value="C:vacuole"/>
    <property type="evidence" value="ECO:0007669"/>
    <property type="project" value="UniProtKB-SubCell"/>
</dbReference>
<dbReference type="GO" id="GO:0004867">
    <property type="term" value="F:serine-type endopeptidase inhibitor activity"/>
    <property type="evidence" value="ECO:0007669"/>
    <property type="project" value="UniProtKB-KW"/>
</dbReference>
<name>SPI3_SOLTU</name>
<feature type="chain" id="PRO_0000083308" description="Serine protease inhibitor 3">
    <location>
        <begin position="1"/>
        <end position="21" status="greater than"/>
    </location>
</feature>
<feature type="non-terminal residue">
    <location>
        <position position="21"/>
    </location>
</feature>
<evidence type="ECO:0000250" key="1"/>
<evidence type="ECO:0000305" key="2"/>
<sequence>FVLPFDVLDSGRDLDRGWPYA</sequence>
<accession>P58516</accession>
<reference key="1">
    <citation type="journal article" date="1998" name="FEBS Lett.">
        <title>Kunitz-type proteinase inhibitors from intact and Phytophthora-infected potato tubers.</title>
        <authorList>
            <person name="Valueva T.A."/>
            <person name="Revina T.A."/>
            <person name="Kladnitskaya G.V."/>
            <person name="Mosolov V.V."/>
        </authorList>
    </citation>
    <scope>PROTEIN SEQUENCE</scope>
    <source>
        <strain>cv. Istrinskii</strain>
    </source>
</reference>
<keyword id="KW-0903">Direct protein sequencing</keyword>
<keyword id="KW-0646">Protease inhibitor</keyword>
<keyword id="KW-1185">Reference proteome</keyword>
<keyword id="KW-0722">Serine protease inhibitor</keyword>
<keyword id="KW-0926">Vacuole</keyword>
<proteinExistence type="evidence at protein level"/>
<organism>
    <name type="scientific">Solanum tuberosum</name>
    <name type="common">Potato</name>
    <dbReference type="NCBI Taxonomy" id="4113"/>
    <lineage>
        <taxon>Eukaryota</taxon>
        <taxon>Viridiplantae</taxon>
        <taxon>Streptophyta</taxon>
        <taxon>Embryophyta</taxon>
        <taxon>Tracheophyta</taxon>
        <taxon>Spermatophyta</taxon>
        <taxon>Magnoliopsida</taxon>
        <taxon>eudicotyledons</taxon>
        <taxon>Gunneridae</taxon>
        <taxon>Pentapetalae</taxon>
        <taxon>asterids</taxon>
        <taxon>lamiids</taxon>
        <taxon>Solanales</taxon>
        <taxon>Solanaceae</taxon>
        <taxon>Solanoideae</taxon>
        <taxon>Solaneae</taxon>
        <taxon>Solanum</taxon>
    </lineage>
</organism>
<protein>
    <recommendedName>
        <fullName>Serine protease inhibitor 3</fullName>
    </recommendedName>
    <alternativeName>
        <fullName>PSPI-22</fullName>
    </alternativeName>
</protein>